<comment type="function">
    <text evidence="1">Catalyzes the NAD(+)-dependent oxidation of L-threonine to 2-amino-3-ketobutyrate.</text>
</comment>
<comment type="catalytic activity">
    <reaction evidence="1">
        <text>L-threonine + NAD(+) = (2S)-2-amino-3-oxobutanoate + NADH + H(+)</text>
        <dbReference type="Rhea" id="RHEA:13161"/>
        <dbReference type="ChEBI" id="CHEBI:15378"/>
        <dbReference type="ChEBI" id="CHEBI:57540"/>
        <dbReference type="ChEBI" id="CHEBI:57926"/>
        <dbReference type="ChEBI" id="CHEBI:57945"/>
        <dbReference type="ChEBI" id="CHEBI:78948"/>
        <dbReference type="EC" id="1.1.1.103"/>
    </reaction>
</comment>
<comment type="cofactor">
    <cofactor evidence="1">
        <name>Zn(2+)</name>
        <dbReference type="ChEBI" id="CHEBI:29105"/>
    </cofactor>
    <text evidence="1">Binds 2 Zn(2+) ions per subunit.</text>
</comment>
<comment type="pathway">
    <text evidence="1">Amino-acid degradation; L-threonine degradation via oxydo-reductase pathway; glycine from L-threonine: step 1/2.</text>
</comment>
<comment type="subunit">
    <text evidence="1">Homotetramer.</text>
</comment>
<comment type="subcellular location">
    <subcellularLocation>
        <location evidence="1">Cytoplasm</location>
    </subcellularLocation>
</comment>
<comment type="similarity">
    <text evidence="1">Belongs to the zinc-containing alcohol dehydrogenase family.</text>
</comment>
<accession>B1K269</accession>
<feature type="chain" id="PRO_1000130538" description="L-threonine 3-dehydrogenase">
    <location>
        <begin position="1"/>
        <end position="342"/>
    </location>
</feature>
<feature type="active site" description="Charge relay system" evidence="1">
    <location>
        <position position="40"/>
    </location>
</feature>
<feature type="active site" description="Charge relay system" evidence="1">
    <location>
        <position position="43"/>
    </location>
</feature>
<feature type="binding site" evidence="1">
    <location>
        <position position="38"/>
    </location>
    <ligand>
        <name>Zn(2+)</name>
        <dbReference type="ChEBI" id="CHEBI:29105"/>
        <label>1</label>
        <note>catalytic</note>
    </ligand>
</feature>
<feature type="binding site" evidence="1">
    <location>
        <position position="63"/>
    </location>
    <ligand>
        <name>Zn(2+)</name>
        <dbReference type="ChEBI" id="CHEBI:29105"/>
        <label>1</label>
        <note>catalytic</note>
    </ligand>
</feature>
<feature type="binding site" evidence="1">
    <location>
        <position position="64"/>
    </location>
    <ligand>
        <name>Zn(2+)</name>
        <dbReference type="ChEBI" id="CHEBI:29105"/>
        <label>1</label>
        <note>catalytic</note>
    </ligand>
</feature>
<feature type="binding site" evidence="1">
    <location>
        <position position="93"/>
    </location>
    <ligand>
        <name>Zn(2+)</name>
        <dbReference type="ChEBI" id="CHEBI:29105"/>
        <label>2</label>
    </ligand>
</feature>
<feature type="binding site" evidence="1">
    <location>
        <position position="96"/>
    </location>
    <ligand>
        <name>Zn(2+)</name>
        <dbReference type="ChEBI" id="CHEBI:29105"/>
        <label>2</label>
    </ligand>
</feature>
<feature type="binding site" evidence="1">
    <location>
        <position position="99"/>
    </location>
    <ligand>
        <name>Zn(2+)</name>
        <dbReference type="ChEBI" id="CHEBI:29105"/>
        <label>2</label>
    </ligand>
</feature>
<feature type="binding site" evidence="1">
    <location>
        <position position="107"/>
    </location>
    <ligand>
        <name>Zn(2+)</name>
        <dbReference type="ChEBI" id="CHEBI:29105"/>
        <label>2</label>
    </ligand>
</feature>
<feature type="binding site" evidence="1">
    <location>
        <position position="175"/>
    </location>
    <ligand>
        <name>NAD(+)</name>
        <dbReference type="ChEBI" id="CHEBI:57540"/>
    </ligand>
</feature>
<feature type="binding site" evidence="1">
    <location>
        <position position="195"/>
    </location>
    <ligand>
        <name>NAD(+)</name>
        <dbReference type="ChEBI" id="CHEBI:57540"/>
    </ligand>
</feature>
<feature type="binding site" evidence="1">
    <location>
        <position position="200"/>
    </location>
    <ligand>
        <name>NAD(+)</name>
        <dbReference type="ChEBI" id="CHEBI:57540"/>
    </ligand>
</feature>
<feature type="binding site" evidence="1">
    <location>
        <begin position="262"/>
        <end position="264"/>
    </location>
    <ligand>
        <name>NAD(+)</name>
        <dbReference type="ChEBI" id="CHEBI:57540"/>
    </ligand>
</feature>
<feature type="binding site" evidence="1">
    <location>
        <begin position="286"/>
        <end position="287"/>
    </location>
    <ligand>
        <name>NAD(+)</name>
        <dbReference type="ChEBI" id="CHEBI:57540"/>
    </ligand>
</feature>
<feature type="site" description="Important for catalytic activity for the proton relay mechanism but does not participate directly in the coordination of zinc atom" evidence="1">
    <location>
        <position position="148"/>
    </location>
</feature>
<gene>
    <name evidence="1" type="primary">tdh</name>
    <name type="ordered locus">Bcenmc03_4535</name>
</gene>
<reference key="1">
    <citation type="submission" date="2008-02" db="EMBL/GenBank/DDBJ databases">
        <title>Complete sequence of chromosome 2 of Burkholderia cenocepacia MC0-3.</title>
        <authorList>
            <person name="Copeland A."/>
            <person name="Lucas S."/>
            <person name="Lapidus A."/>
            <person name="Barry K."/>
            <person name="Bruce D."/>
            <person name="Goodwin L."/>
            <person name="Glavina del Rio T."/>
            <person name="Dalin E."/>
            <person name="Tice H."/>
            <person name="Pitluck S."/>
            <person name="Chain P."/>
            <person name="Malfatti S."/>
            <person name="Shin M."/>
            <person name="Vergez L."/>
            <person name="Schmutz J."/>
            <person name="Larimer F."/>
            <person name="Land M."/>
            <person name="Hauser L."/>
            <person name="Kyrpides N."/>
            <person name="Mikhailova N."/>
            <person name="Tiedje J."/>
            <person name="Richardson P."/>
        </authorList>
    </citation>
    <scope>NUCLEOTIDE SEQUENCE [LARGE SCALE GENOMIC DNA]</scope>
    <source>
        <strain>MC0-3</strain>
    </source>
</reference>
<proteinExistence type="inferred from homology"/>
<evidence type="ECO:0000255" key="1">
    <source>
        <dbReference type="HAMAP-Rule" id="MF_00627"/>
    </source>
</evidence>
<organism>
    <name type="scientific">Burkholderia orbicola (strain MC0-3)</name>
    <dbReference type="NCBI Taxonomy" id="406425"/>
    <lineage>
        <taxon>Bacteria</taxon>
        <taxon>Pseudomonadati</taxon>
        <taxon>Pseudomonadota</taxon>
        <taxon>Betaproteobacteria</taxon>
        <taxon>Burkholderiales</taxon>
        <taxon>Burkholderiaceae</taxon>
        <taxon>Burkholderia</taxon>
        <taxon>Burkholderia cepacia complex</taxon>
        <taxon>Burkholderia orbicola</taxon>
    </lineage>
</organism>
<keyword id="KW-0963">Cytoplasm</keyword>
<keyword id="KW-0479">Metal-binding</keyword>
<keyword id="KW-0520">NAD</keyword>
<keyword id="KW-0560">Oxidoreductase</keyword>
<keyword id="KW-0862">Zinc</keyword>
<dbReference type="EC" id="1.1.1.103" evidence="1"/>
<dbReference type="EMBL" id="CP000959">
    <property type="protein sequence ID" value="ACA93675.1"/>
    <property type="molecule type" value="Genomic_DNA"/>
</dbReference>
<dbReference type="RefSeq" id="WP_011548747.1">
    <property type="nucleotide sequence ID" value="NC_010515.1"/>
</dbReference>
<dbReference type="SMR" id="B1K269"/>
<dbReference type="GeneID" id="83051266"/>
<dbReference type="KEGG" id="bcm:Bcenmc03_4535"/>
<dbReference type="HOGENOM" id="CLU_026673_11_0_4"/>
<dbReference type="UniPathway" id="UPA00046">
    <property type="reaction ID" value="UER00505"/>
</dbReference>
<dbReference type="Proteomes" id="UP000002169">
    <property type="component" value="Chromosome 2"/>
</dbReference>
<dbReference type="GO" id="GO:0005737">
    <property type="term" value="C:cytoplasm"/>
    <property type="evidence" value="ECO:0007669"/>
    <property type="project" value="UniProtKB-SubCell"/>
</dbReference>
<dbReference type="GO" id="GO:0008743">
    <property type="term" value="F:L-threonine 3-dehydrogenase activity"/>
    <property type="evidence" value="ECO:0007669"/>
    <property type="project" value="UniProtKB-UniRule"/>
</dbReference>
<dbReference type="GO" id="GO:0008270">
    <property type="term" value="F:zinc ion binding"/>
    <property type="evidence" value="ECO:0007669"/>
    <property type="project" value="UniProtKB-UniRule"/>
</dbReference>
<dbReference type="GO" id="GO:0019518">
    <property type="term" value="P:L-threonine catabolic process to glycine"/>
    <property type="evidence" value="ECO:0007669"/>
    <property type="project" value="UniProtKB-UniPathway"/>
</dbReference>
<dbReference type="Gene3D" id="3.90.180.10">
    <property type="entry name" value="Medium-chain alcohol dehydrogenases, catalytic domain"/>
    <property type="match status" value="1"/>
</dbReference>
<dbReference type="Gene3D" id="3.40.50.720">
    <property type="entry name" value="NAD(P)-binding Rossmann-like Domain"/>
    <property type="match status" value="1"/>
</dbReference>
<dbReference type="HAMAP" id="MF_00627">
    <property type="entry name" value="Thr_dehydrog"/>
    <property type="match status" value="1"/>
</dbReference>
<dbReference type="InterPro" id="IPR013149">
    <property type="entry name" value="ADH-like_C"/>
</dbReference>
<dbReference type="InterPro" id="IPR013154">
    <property type="entry name" value="ADH-like_N"/>
</dbReference>
<dbReference type="InterPro" id="IPR002328">
    <property type="entry name" value="ADH_Zn_CS"/>
</dbReference>
<dbReference type="InterPro" id="IPR011032">
    <property type="entry name" value="GroES-like_sf"/>
</dbReference>
<dbReference type="InterPro" id="IPR004627">
    <property type="entry name" value="L-Threonine_3-DHase"/>
</dbReference>
<dbReference type="InterPro" id="IPR036291">
    <property type="entry name" value="NAD(P)-bd_dom_sf"/>
</dbReference>
<dbReference type="InterPro" id="IPR020843">
    <property type="entry name" value="PKS_ER"/>
</dbReference>
<dbReference type="InterPro" id="IPR050129">
    <property type="entry name" value="Zn_alcohol_dh"/>
</dbReference>
<dbReference type="NCBIfam" id="NF003808">
    <property type="entry name" value="PRK05396.1"/>
    <property type="match status" value="1"/>
</dbReference>
<dbReference type="NCBIfam" id="TIGR00692">
    <property type="entry name" value="tdh"/>
    <property type="match status" value="1"/>
</dbReference>
<dbReference type="PANTHER" id="PTHR43401">
    <property type="entry name" value="L-THREONINE 3-DEHYDROGENASE"/>
    <property type="match status" value="1"/>
</dbReference>
<dbReference type="PANTHER" id="PTHR43401:SF2">
    <property type="entry name" value="L-THREONINE 3-DEHYDROGENASE"/>
    <property type="match status" value="1"/>
</dbReference>
<dbReference type="Pfam" id="PF08240">
    <property type="entry name" value="ADH_N"/>
    <property type="match status" value="1"/>
</dbReference>
<dbReference type="Pfam" id="PF00107">
    <property type="entry name" value="ADH_zinc_N"/>
    <property type="match status" value="1"/>
</dbReference>
<dbReference type="SMART" id="SM00829">
    <property type="entry name" value="PKS_ER"/>
    <property type="match status" value="1"/>
</dbReference>
<dbReference type="SUPFAM" id="SSF50129">
    <property type="entry name" value="GroES-like"/>
    <property type="match status" value="1"/>
</dbReference>
<dbReference type="SUPFAM" id="SSF51735">
    <property type="entry name" value="NAD(P)-binding Rossmann-fold domains"/>
    <property type="match status" value="1"/>
</dbReference>
<dbReference type="PROSITE" id="PS00059">
    <property type="entry name" value="ADH_ZINC"/>
    <property type="match status" value="1"/>
</dbReference>
<name>TDH_BURO0</name>
<sequence>MKALAKLERGPGLTLTRVKRPEVGHNDVLIKIRRTAICGTDIHIWKWDDWAQKTIPVPMHVGHEYVGEIVEMGQEVRGFAIGDRVSGEGHITCGFCRNCRAGRRHLCRNTVGVGVNREGAFAEYLAIPAFNAFKIPPEISDDLASIFDPFGNATHTALSFNLVGEDVLITGAGPIGIMAVAIAKHVGARNVVITDINDYRLELARKMGATRAVNVARESLRDVMADLHMTEGFDVGLEMSGVPSAFTSLLEAMNHGGKVALLGIPPAQTAIDWNQVIFKGLEIKGIYGREMFETWYKMVAMLQSGLDLSPIITHRFAADDYEQGFAAMLSGESGKVILDWTA</sequence>
<protein>
    <recommendedName>
        <fullName evidence="1">L-threonine 3-dehydrogenase</fullName>
        <shortName evidence="1">TDH</shortName>
        <ecNumber evidence="1">1.1.1.103</ecNumber>
    </recommendedName>
</protein>